<reference evidence="6" key="1">
    <citation type="submission" date="2006-03" db="EMBL/GenBank/DDBJ databases">
        <title>Sunflower (Helianthus annuus) ESTs (set 2) from the compositae genome project http://compgenomics.ucdavis.edu/.</title>
        <authorList>
            <person name="Michelmore R.W."/>
            <person name="Knapp S."/>
            <person name="Rieseberg L."/>
            <person name="Bradford K."/>
            <person name="Kesseli R."/>
            <person name="Boore J."/>
            <person name="Kozik A."/>
            <person name="Matvienko M."/>
            <person name="Lavelle D."/>
            <person name="Lai Z."/>
        </authorList>
    </citation>
    <scope>NUCLEOTIDE SEQUENCE [LARGE SCALE MRNA]</scope>
    <source>
        <strain evidence="4">cv. ANN1312</strain>
    </source>
</reference>
<reference evidence="6" key="2">
    <citation type="journal article" date="2009" name="Metallomics">
        <title>Evaluation of metal-ion stress in sunflower (Heliantus annus L.) leaves through proteomic changes.</title>
        <authorList>
            <person name="Garcia J.S."/>
            <person name="Souza G.H.M.F."/>
            <person name="Eberlin M.N."/>
            <person name="Arruda M.A.Z."/>
        </authorList>
    </citation>
    <scope>IDENTIFICATION BY MASS SPECTROMETRY</scope>
    <scope>INDUCTION</scope>
</reference>
<proteinExistence type="evidence at protein level"/>
<comment type="induction">
    <text evidence="5">Down-regulated in response to mixed metal ion contamination (cadmium, copper, lead and zinc), but not in response to zinc ion contamination.</text>
</comment>
<comment type="domain">
    <text evidence="6">The Q motif is unique to and characteristic of the DEAD box family of RNA helicases and controls ATP binding and hydrolysis.</text>
</comment>
<comment type="similarity">
    <text evidence="2">Belongs to the DEAD box helicase family. DDX21/DDX50 subfamily.</text>
</comment>
<dbReference type="EC" id="3.6.1.-"/>
<dbReference type="EMBL" id="DY911458">
    <property type="status" value="NOT_ANNOTATED_CDS"/>
    <property type="molecule type" value="mRNA"/>
</dbReference>
<dbReference type="SMR" id="P85199"/>
<dbReference type="GO" id="GO:0005524">
    <property type="term" value="F:ATP binding"/>
    <property type="evidence" value="ECO:0007669"/>
    <property type="project" value="UniProtKB-KW"/>
</dbReference>
<dbReference type="GO" id="GO:0016787">
    <property type="term" value="F:hydrolase activity"/>
    <property type="evidence" value="ECO:0007669"/>
    <property type="project" value="UniProtKB-KW"/>
</dbReference>
<dbReference type="GO" id="GO:0003723">
    <property type="term" value="F:RNA binding"/>
    <property type="evidence" value="ECO:0007669"/>
    <property type="project" value="UniProtKB-KW"/>
</dbReference>
<dbReference type="GO" id="GO:0003724">
    <property type="term" value="F:RNA helicase activity"/>
    <property type="evidence" value="ECO:0007669"/>
    <property type="project" value="InterPro"/>
</dbReference>
<dbReference type="CDD" id="cd00268">
    <property type="entry name" value="DEADc"/>
    <property type="match status" value="1"/>
</dbReference>
<dbReference type="Gene3D" id="3.40.50.300">
    <property type="entry name" value="P-loop containing nucleotide triphosphate hydrolases"/>
    <property type="match status" value="1"/>
</dbReference>
<dbReference type="InterPro" id="IPR011545">
    <property type="entry name" value="DEAD/DEAH_box_helicase_dom"/>
</dbReference>
<dbReference type="InterPro" id="IPR050079">
    <property type="entry name" value="DEAD_box_RNA_helicase"/>
</dbReference>
<dbReference type="InterPro" id="IPR014001">
    <property type="entry name" value="Helicase_ATP-bd"/>
</dbReference>
<dbReference type="InterPro" id="IPR027417">
    <property type="entry name" value="P-loop_NTPase"/>
</dbReference>
<dbReference type="InterPro" id="IPR014014">
    <property type="entry name" value="RNA_helicase_DEAD_Q_motif"/>
</dbReference>
<dbReference type="PANTHER" id="PTHR47959:SF1">
    <property type="entry name" value="ATP-DEPENDENT RNA HELICASE DBPA"/>
    <property type="match status" value="1"/>
</dbReference>
<dbReference type="PANTHER" id="PTHR47959">
    <property type="entry name" value="ATP-DEPENDENT RNA HELICASE RHLE-RELATED"/>
    <property type="match status" value="1"/>
</dbReference>
<dbReference type="Pfam" id="PF00270">
    <property type="entry name" value="DEAD"/>
    <property type="match status" value="1"/>
</dbReference>
<dbReference type="SUPFAM" id="SSF52540">
    <property type="entry name" value="P-loop containing nucleoside triphosphate hydrolases"/>
    <property type="match status" value="1"/>
</dbReference>
<dbReference type="PROSITE" id="PS51192">
    <property type="entry name" value="HELICASE_ATP_BIND_1"/>
    <property type="match status" value="1"/>
</dbReference>
<dbReference type="PROSITE" id="PS51195">
    <property type="entry name" value="Q_MOTIF"/>
    <property type="match status" value="1"/>
</dbReference>
<name>RH3_HELAN</name>
<protein>
    <recommendedName>
        <fullName evidence="1">DEAD-box ATP-dependent RNA helicase 3</fullName>
        <ecNumber>3.6.1.-</ecNumber>
    </recommendedName>
</protein>
<sequence length="234" mass="24786">TRGGYLNKFTTVVASIIGVSSLYKVPTKPTTLSPPFISPKPGFMSLPPRKHEVVGGASSSLVAAAVSARNSVISEDLFEGLALFDKASSLEDDGGDNVSEFQASIDDVNDGGGGGGDDELAVSRLGLPQKLVETLEKRGITKLFPIQRAVLVPALEGRDIIGRAKTGTGKTLAFAIPIIKRLTEEDEDNRNSLAGRLPRVLVLAPTRELAKQVETEIKEPAPYLRTVCVYGGVS</sequence>
<feature type="chain" id="PRO_0000397231" description="DEAD-box ATP-dependent RNA helicase 3">
    <location>
        <begin position="1" status="less than"/>
        <end position="234" status="greater than"/>
    </location>
</feature>
<feature type="domain" description="Helicase ATP-binding" evidence="3">
    <location>
        <begin position="151"/>
        <end position="234" status="greater than"/>
    </location>
</feature>
<feature type="short sequence motif" description="Q motif" evidence="2">
    <location>
        <begin position="120"/>
        <end position="148"/>
    </location>
</feature>
<feature type="binding site" evidence="3">
    <location>
        <begin position="164"/>
        <end position="171"/>
    </location>
    <ligand>
        <name>ATP</name>
        <dbReference type="ChEBI" id="CHEBI:30616"/>
    </ligand>
</feature>
<feature type="non-terminal residue" evidence="6">
    <location>
        <position position="1"/>
    </location>
</feature>
<feature type="non-terminal residue" evidence="6">
    <location>
        <position position="234"/>
    </location>
</feature>
<accession>P85199</accession>
<organism>
    <name type="scientific">Helianthus annuus</name>
    <name type="common">Common sunflower</name>
    <dbReference type="NCBI Taxonomy" id="4232"/>
    <lineage>
        <taxon>Eukaryota</taxon>
        <taxon>Viridiplantae</taxon>
        <taxon>Streptophyta</taxon>
        <taxon>Embryophyta</taxon>
        <taxon>Tracheophyta</taxon>
        <taxon>Spermatophyta</taxon>
        <taxon>Magnoliopsida</taxon>
        <taxon>eudicotyledons</taxon>
        <taxon>Gunneridae</taxon>
        <taxon>Pentapetalae</taxon>
        <taxon>asterids</taxon>
        <taxon>campanulids</taxon>
        <taxon>Asterales</taxon>
        <taxon>Asteraceae</taxon>
        <taxon>Asteroideae</taxon>
        <taxon>Heliantheae alliance</taxon>
        <taxon>Heliantheae</taxon>
        <taxon>Helianthus</taxon>
    </lineage>
</organism>
<evidence type="ECO:0000250" key="1">
    <source>
        <dbReference type="UniProtKB" id="Q0DM51"/>
    </source>
</evidence>
<evidence type="ECO:0000255" key="2"/>
<evidence type="ECO:0000255" key="3">
    <source>
        <dbReference type="PROSITE-ProRule" id="PRU00541"/>
    </source>
</evidence>
<evidence type="ECO:0000269" key="4">
    <source ref="1"/>
</evidence>
<evidence type="ECO:0000269" key="5">
    <source ref="2"/>
</evidence>
<evidence type="ECO:0000305" key="6"/>
<keyword id="KW-0067">ATP-binding</keyword>
<keyword id="KW-0347">Helicase</keyword>
<keyword id="KW-0378">Hydrolase</keyword>
<keyword id="KW-0547">Nucleotide-binding</keyword>
<keyword id="KW-0694">RNA-binding</keyword>